<accession>B7MD52</accession>
<protein>
    <recommendedName>
        <fullName evidence="1">Recombination-associated protein RdgC</fullName>
    </recommendedName>
</protein>
<evidence type="ECO:0000255" key="1">
    <source>
        <dbReference type="HAMAP-Rule" id="MF_00194"/>
    </source>
</evidence>
<reference key="1">
    <citation type="journal article" date="2009" name="PLoS Genet.">
        <title>Organised genome dynamics in the Escherichia coli species results in highly diverse adaptive paths.</title>
        <authorList>
            <person name="Touchon M."/>
            <person name="Hoede C."/>
            <person name="Tenaillon O."/>
            <person name="Barbe V."/>
            <person name="Baeriswyl S."/>
            <person name="Bidet P."/>
            <person name="Bingen E."/>
            <person name="Bonacorsi S."/>
            <person name="Bouchier C."/>
            <person name="Bouvet O."/>
            <person name="Calteau A."/>
            <person name="Chiapello H."/>
            <person name="Clermont O."/>
            <person name="Cruveiller S."/>
            <person name="Danchin A."/>
            <person name="Diard M."/>
            <person name="Dossat C."/>
            <person name="Karoui M.E."/>
            <person name="Frapy E."/>
            <person name="Garry L."/>
            <person name="Ghigo J.M."/>
            <person name="Gilles A.M."/>
            <person name="Johnson J."/>
            <person name="Le Bouguenec C."/>
            <person name="Lescat M."/>
            <person name="Mangenot S."/>
            <person name="Martinez-Jehanne V."/>
            <person name="Matic I."/>
            <person name="Nassif X."/>
            <person name="Oztas S."/>
            <person name="Petit M.A."/>
            <person name="Pichon C."/>
            <person name="Rouy Z."/>
            <person name="Ruf C.S."/>
            <person name="Schneider D."/>
            <person name="Tourret J."/>
            <person name="Vacherie B."/>
            <person name="Vallenet D."/>
            <person name="Medigue C."/>
            <person name="Rocha E.P.C."/>
            <person name="Denamur E."/>
        </authorList>
    </citation>
    <scope>NUCLEOTIDE SEQUENCE [LARGE SCALE GENOMIC DNA]</scope>
    <source>
        <strain>S88 / ExPEC</strain>
    </source>
</reference>
<dbReference type="EMBL" id="CU928161">
    <property type="protein sequence ID" value="CAR01737.1"/>
    <property type="molecule type" value="Genomic_DNA"/>
</dbReference>
<dbReference type="RefSeq" id="WP_001298537.1">
    <property type="nucleotide sequence ID" value="NC_011742.1"/>
</dbReference>
<dbReference type="SMR" id="B7MD52"/>
<dbReference type="GeneID" id="75202816"/>
<dbReference type="KEGG" id="ecz:ECS88_0388"/>
<dbReference type="HOGENOM" id="CLU_052038_1_1_6"/>
<dbReference type="Proteomes" id="UP000000747">
    <property type="component" value="Chromosome"/>
</dbReference>
<dbReference type="GO" id="GO:0043590">
    <property type="term" value="C:bacterial nucleoid"/>
    <property type="evidence" value="ECO:0007669"/>
    <property type="project" value="TreeGrafter"/>
</dbReference>
<dbReference type="GO" id="GO:0005737">
    <property type="term" value="C:cytoplasm"/>
    <property type="evidence" value="ECO:0007669"/>
    <property type="project" value="UniProtKB-UniRule"/>
</dbReference>
<dbReference type="GO" id="GO:0003690">
    <property type="term" value="F:double-stranded DNA binding"/>
    <property type="evidence" value="ECO:0007669"/>
    <property type="project" value="TreeGrafter"/>
</dbReference>
<dbReference type="GO" id="GO:0006310">
    <property type="term" value="P:DNA recombination"/>
    <property type="evidence" value="ECO:0007669"/>
    <property type="project" value="UniProtKB-UniRule"/>
</dbReference>
<dbReference type="GO" id="GO:0000018">
    <property type="term" value="P:regulation of DNA recombination"/>
    <property type="evidence" value="ECO:0007669"/>
    <property type="project" value="TreeGrafter"/>
</dbReference>
<dbReference type="HAMAP" id="MF_00194">
    <property type="entry name" value="RdgC"/>
    <property type="match status" value="1"/>
</dbReference>
<dbReference type="InterPro" id="IPR007476">
    <property type="entry name" value="RdgC"/>
</dbReference>
<dbReference type="NCBIfam" id="NF001460">
    <property type="entry name" value="PRK00321.1-1"/>
    <property type="match status" value="1"/>
</dbReference>
<dbReference type="NCBIfam" id="NF001462">
    <property type="entry name" value="PRK00321.1-3"/>
    <property type="match status" value="1"/>
</dbReference>
<dbReference type="NCBIfam" id="NF001464">
    <property type="entry name" value="PRK00321.1-5"/>
    <property type="match status" value="1"/>
</dbReference>
<dbReference type="PANTHER" id="PTHR38103">
    <property type="entry name" value="RECOMBINATION-ASSOCIATED PROTEIN RDGC"/>
    <property type="match status" value="1"/>
</dbReference>
<dbReference type="PANTHER" id="PTHR38103:SF1">
    <property type="entry name" value="RECOMBINATION-ASSOCIATED PROTEIN RDGC"/>
    <property type="match status" value="1"/>
</dbReference>
<dbReference type="Pfam" id="PF04381">
    <property type="entry name" value="RdgC"/>
    <property type="match status" value="1"/>
</dbReference>
<organism>
    <name type="scientific">Escherichia coli O45:K1 (strain S88 / ExPEC)</name>
    <dbReference type="NCBI Taxonomy" id="585035"/>
    <lineage>
        <taxon>Bacteria</taxon>
        <taxon>Pseudomonadati</taxon>
        <taxon>Pseudomonadota</taxon>
        <taxon>Gammaproteobacteria</taxon>
        <taxon>Enterobacterales</taxon>
        <taxon>Enterobacteriaceae</taxon>
        <taxon>Escherichia</taxon>
    </lineage>
</organism>
<keyword id="KW-0963">Cytoplasm</keyword>
<keyword id="KW-0233">DNA recombination</keyword>
<keyword id="KW-1185">Reference proteome</keyword>
<gene>
    <name evidence="1" type="primary">rdgC</name>
    <name type="ordered locus">ECS88_0388</name>
</gene>
<comment type="function">
    <text evidence="1">May be involved in recombination.</text>
</comment>
<comment type="subcellular location">
    <subcellularLocation>
        <location evidence="1">Cytoplasm</location>
        <location evidence="1">Nucleoid</location>
    </subcellularLocation>
</comment>
<comment type="similarity">
    <text evidence="1">Belongs to the RdgC family.</text>
</comment>
<sequence length="303" mass="33993">MLWFKNLMVYRLSREISLRAEEMEKQLASMAFTPCGSQDMAKMGWVPPMGSHSDALTHVANGQIVICARKEEKILPSPVIKQALEAKIAKLEAEQARKLKKTEKDSLKDEVLHSLLPRAFSRFSQTMMWIDTVNGLIMVDCASAKKAEDTLALLRKSLGSLPVVPLSMENPIELTLTEWVRSGSAAQGFQLLDEAELKSLLEDGGVIRAKKQDLTSEEITNHIEAGKVVTKLALDWQQRIQFVMCDDGSLKRLKFCDELRDQNEDIDREDFAQRFDADFILMTGELAALIQNLIEGLGGEAQR</sequence>
<feature type="chain" id="PRO_1000118626" description="Recombination-associated protein RdgC">
    <location>
        <begin position="1"/>
        <end position="303"/>
    </location>
</feature>
<proteinExistence type="inferred from homology"/>
<name>RDGC_ECO45</name>